<reference key="1">
    <citation type="journal article" date="2006" name="Proc. Natl. Acad. Sci. U.S.A.">
        <title>Comparative genomics of the lactic acid bacteria.</title>
        <authorList>
            <person name="Makarova K.S."/>
            <person name="Slesarev A."/>
            <person name="Wolf Y.I."/>
            <person name="Sorokin A."/>
            <person name="Mirkin B."/>
            <person name="Koonin E.V."/>
            <person name="Pavlov A."/>
            <person name="Pavlova N."/>
            <person name="Karamychev V."/>
            <person name="Polouchine N."/>
            <person name="Shakhova V."/>
            <person name="Grigoriev I."/>
            <person name="Lou Y."/>
            <person name="Rohksar D."/>
            <person name="Lucas S."/>
            <person name="Huang K."/>
            <person name="Goodstein D.M."/>
            <person name="Hawkins T."/>
            <person name="Plengvidhya V."/>
            <person name="Welker D."/>
            <person name="Hughes J."/>
            <person name="Goh Y."/>
            <person name="Benson A."/>
            <person name="Baldwin K."/>
            <person name="Lee J.-H."/>
            <person name="Diaz-Muniz I."/>
            <person name="Dosti B."/>
            <person name="Smeianov V."/>
            <person name="Wechter W."/>
            <person name="Barabote R."/>
            <person name="Lorca G."/>
            <person name="Altermann E."/>
            <person name="Barrangou R."/>
            <person name="Ganesan B."/>
            <person name="Xie Y."/>
            <person name="Rawsthorne H."/>
            <person name="Tamir D."/>
            <person name="Parker C."/>
            <person name="Breidt F."/>
            <person name="Broadbent J.R."/>
            <person name="Hutkins R."/>
            <person name="O'Sullivan D."/>
            <person name="Steele J."/>
            <person name="Unlu G."/>
            <person name="Saier M.H. Jr."/>
            <person name="Klaenhammer T."/>
            <person name="Richardson P."/>
            <person name="Kozyavkin S."/>
            <person name="Weimer B.C."/>
            <person name="Mills D.A."/>
        </authorList>
    </citation>
    <scope>NUCLEOTIDE SEQUENCE [LARGE SCALE GENOMIC DNA]</scope>
    <source>
        <strain>ATCC 367 / BCRC 12310 / CIP 105137 / JCM 1170 / LMG 11437 / NCIMB 947 / NCTC 947</strain>
    </source>
</reference>
<gene>
    <name type="ordered locus">LVIS_1222</name>
</gene>
<organism>
    <name type="scientific">Levilactobacillus brevis (strain ATCC 367 / BCRC 12310 / CIP 105137 / JCM 1170 / LMG 11437 / NCIMB 947 / NCTC 947)</name>
    <name type="common">Lactobacillus brevis</name>
    <dbReference type="NCBI Taxonomy" id="387344"/>
    <lineage>
        <taxon>Bacteria</taxon>
        <taxon>Bacillati</taxon>
        <taxon>Bacillota</taxon>
        <taxon>Bacilli</taxon>
        <taxon>Lactobacillales</taxon>
        <taxon>Lactobacillaceae</taxon>
        <taxon>Levilactobacillus</taxon>
    </lineage>
</organism>
<dbReference type="EMBL" id="CP000416">
    <property type="protein sequence ID" value="ABJ64328.1"/>
    <property type="molecule type" value="Genomic_DNA"/>
</dbReference>
<dbReference type="RefSeq" id="WP_011667958.1">
    <property type="nucleotide sequence ID" value="NC_008497.1"/>
</dbReference>
<dbReference type="SMR" id="Q03R44"/>
<dbReference type="STRING" id="387344.LVIS_1222"/>
<dbReference type="KEGG" id="lbr:LVIS_1222"/>
<dbReference type="PATRIC" id="fig|387344.15.peg.1161"/>
<dbReference type="eggNOG" id="COG4472">
    <property type="taxonomic scope" value="Bacteria"/>
</dbReference>
<dbReference type="HOGENOM" id="CLU_162466_0_0_9"/>
<dbReference type="Proteomes" id="UP000001652">
    <property type="component" value="Chromosome"/>
</dbReference>
<dbReference type="HAMAP" id="MF_01507">
    <property type="entry name" value="UPF0297"/>
    <property type="match status" value="1"/>
</dbReference>
<dbReference type="InterPro" id="IPR009309">
    <property type="entry name" value="IreB"/>
</dbReference>
<dbReference type="NCBIfam" id="NF003997">
    <property type="entry name" value="PRK05473.1"/>
    <property type="match status" value="1"/>
</dbReference>
<dbReference type="PANTHER" id="PTHR40067">
    <property type="entry name" value="UPF0297 PROTEIN YRZL"/>
    <property type="match status" value="1"/>
</dbReference>
<dbReference type="PANTHER" id="PTHR40067:SF1">
    <property type="entry name" value="UPF0297 PROTEIN YRZL"/>
    <property type="match status" value="1"/>
</dbReference>
<dbReference type="Pfam" id="PF06135">
    <property type="entry name" value="IreB"/>
    <property type="match status" value="1"/>
</dbReference>
<dbReference type="PIRSF" id="PIRSF037258">
    <property type="entry name" value="DUF965_bac"/>
    <property type="match status" value="1"/>
</dbReference>
<feature type="chain" id="PRO_0000289301" description="UPF0297 protein LVIS_1222">
    <location>
        <begin position="1"/>
        <end position="90"/>
    </location>
</feature>
<protein>
    <recommendedName>
        <fullName evidence="1">UPF0297 protein LVIS_1222</fullName>
    </recommendedName>
</protein>
<accession>Q03R44</accession>
<name>Y1222_LEVBA</name>
<keyword id="KW-1185">Reference proteome</keyword>
<comment type="similarity">
    <text evidence="1">Belongs to the UPF0297 family.</text>
</comment>
<sequence length="90" mass="10359">MSSLDKTMYFDFGANQPKDVHDTLVTVYQALEEKGYNPINQIVGYLLSGDPAYIPRIDDARNLIRKHERDEIIEELVRVYLNQNGSVKKS</sequence>
<proteinExistence type="inferred from homology"/>
<evidence type="ECO:0000255" key="1">
    <source>
        <dbReference type="HAMAP-Rule" id="MF_01507"/>
    </source>
</evidence>